<proteinExistence type="evidence at protein level"/>
<feature type="chain" id="PRO_0000050432" description="Sugar transport protein 2">
    <location>
        <begin position="1"/>
        <end position="498"/>
    </location>
</feature>
<feature type="topological domain" description="Cytoplasmic" evidence="1">
    <location>
        <begin position="1"/>
        <end position="22"/>
    </location>
</feature>
<feature type="transmembrane region" description="Helical; Name=1" evidence="1">
    <location>
        <begin position="23"/>
        <end position="43"/>
    </location>
</feature>
<feature type="transmembrane region" description="Helical; Name=2" evidence="1">
    <location>
        <begin position="80"/>
        <end position="100"/>
    </location>
</feature>
<feature type="transmembrane region" description="Helical; Name=3" evidence="1">
    <location>
        <begin position="117"/>
        <end position="137"/>
    </location>
</feature>
<feature type="transmembrane region" description="Helical; Name=4" evidence="1">
    <location>
        <begin position="140"/>
        <end position="160"/>
    </location>
</feature>
<feature type="transmembrane region" description="Helical; Name=5" evidence="1">
    <location>
        <begin position="167"/>
        <end position="187"/>
    </location>
</feature>
<feature type="transmembrane region" description="Helical; Name=6" evidence="1">
    <location>
        <begin position="200"/>
        <end position="220"/>
    </location>
</feature>
<feature type="transmembrane region" description="Helical; Name=7" evidence="1">
    <location>
        <begin position="288"/>
        <end position="308"/>
    </location>
</feature>
<feature type="transmembrane region" description="Helical; Name=8" evidence="1">
    <location>
        <begin position="320"/>
        <end position="340"/>
    </location>
</feature>
<feature type="transmembrane region" description="Helical; Name=9" evidence="1">
    <location>
        <begin position="348"/>
        <end position="368"/>
    </location>
</feature>
<feature type="transmembrane region" description="Helical; Name=10" evidence="1">
    <location>
        <begin position="381"/>
        <end position="401"/>
    </location>
</feature>
<feature type="transmembrane region" description="Helical; Name=11" evidence="1">
    <location>
        <begin position="421"/>
        <end position="441"/>
    </location>
</feature>
<feature type="transmembrane region" description="Helical; Name=12" evidence="1">
    <location>
        <begin position="450"/>
        <end position="470"/>
    </location>
</feature>
<feature type="topological domain" description="Cytoplasmic" evidence="1">
    <location>
        <begin position="471"/>
        <end position="498"/>
    </location>
</feature>
<gene>
    <name type="primary">STP2</name>
    <name type="ordered locus">At1g07340</name>
    <name type="ORF">F22G5.32</name>
</gene>
<evidence type="ECO:0000255" key="1"/>
<evidence type="ECO:0000269" key="2">
    <source>
    </source>
</evidence>
<evidence type="ECO:0000305" key="3"/>
<protein>
    <recommendedName>
        <fullName>Sugar transport protein 2</fullName>
    </recommendedName>
    <alternativeName>
        <fullName>Hexose transporter 2</fullName>
    </alternativeName>
</protein>
<organism>
    <name type="scientific">Arabidopsis thaliana</name>
    <name type="common">Mouse-ear cress</name>
    <dbReference type="NCBI Taxonomy" id="3702"/>
    <lineage>
        <taxon>Eukaryota</taxon>
        <taxon>Viridiplantae</taxon>
        <taxon>Streptophyta</taxon>
        <taxon>Embryophyta</taxon>
        <taxon>Tracheophyta</taxon>
        <taxon>Spermatophyta</taxon>
        <taxon>Magnoliopsida</taxon>
        <taxon>eudicotyledons</taxon>
        <taxon>Gunneridae</taxon>
        <taxon>Pentapetalae</taxon>
        <taxon>rosids</taxon>
        <taxon>malvids</taxon>
        <taxon>Brassicales</taxon>
        <taxon>Brassicaceae</taxon>
        <taxon>Camelineae</taxon>
        <taxon>Arabidopsis</taxon>
    </lineage>
</organism>
<dbReference type="EMBL" id="AC022464">
    <property type="protein sequence ID" value="AAF79565.1"/>
    <property type="status" value="ALT_SEQ"/>
    <property type="molecule type" value="Genomic_DNA"/>
</dbReference>
<dbReference type="EMBL" id="CP002684">
    <property type="protein sequence ID" value="AEE28111.1"/>
    <property type="molecule type" value="Genomic_DNA"/>
</dbReference>
<dbReference type="EMBL" id="BX813610">
    <property type="status" value="NOT_ANNOTATED_CDS"/>
    <property type="molecule type" value="mRNA"/>
</dbReference>
<dbReference type="EMBL" id="AJ001362">
    <property type="protein sequence ID" value="CAB59188.1"/>
    <property type="molecule type" value="Genomic_DNA"/>
</dbReference>
<dbReference type="PIR" id="E86208">
    <property type="entry name" value="E86208"/>
</dbReference>
<dbReference type="RefSeq" id="NP_172214.5">
    <property type="nucleotide sequence ID" value="NM_100608.5"/>
</dbReference>
<dbReference type="SMR" id="Q9LNV3"/>
<dbReference type="BioGRID" id="22486">
    <property type="interactions" value="2"/>
</dbReference>
<dbReference type="FunCoup" id="Q9LNV3">
    <property type="interactions" value="31"/>
</dbReference>
<dbReference type="IntAct" id="Q9LNV3">
    <property type="interactions" value="2"/>
</dbReference>
<dbReference type="STRING" id="3702.Q9LNV3"/>
<dbReference type="TCDB" id="2.A.1.1.48">
    <property type="family name" value="the major facilitator superfamily (mfs)"/>
</dbReference>
<dbReference type="PaxDb" id="3702-AT1G07340.1"/>
<dbReference type="ProteomicsDB" id="228362"/>
<dbReference type="EnsemblPlants" id="AT1G07340.1">
    <property type="protein sequence ID" value="AT1G07340.1"/>
    <property type="gene ID" value="AT1G07340"/>
</dbReference>
<dbReference type="GeneID" id="837245"/>
<dbReference type="Gramene" id="AT1G07340.1">
    <property type="protein sequence ID" value="AT1G07340.1"/>
    <property type="gene ID" value="AT1G07340"/>
</dbReference>
<dbReference type="KEGG" id="ath:AT1G07340"/>
<dbReference type="Araport" id="AT1G07340"/>
<dbReference type="TAIR" id="AT1G07340">
    <property type="gene designation" value="STP2"/>
</dbReference>
<dbReference type="eggNOG" id="KOG0254">
    <property type="taxonomic scope" value="Eukaryota"/>
</dbReference>
<dbReference type="HOGENOM" id="CLU_001265_30_5_1"/>
<dbReference type="InParanoid" id="Q9LNV3"/>
<dbReference type="OMA" id="VWIYIYA"/>
<dbReference type="OrthoDB" id="5296287at2759"/>
<dbReference type="PhylomeDB" id="Q9LNV3"/>
<dbReference type="SABIO-RK" id="Q9LNV3"/>
<dbReference type="PRO" id="PR:Q9LNV3"/>
<dbReference type="Proteomes" id="UP000006548">
    <property type="component" value="Chromosome 1"/>
</dbReference>
<dbReference type="ExpressionAtlas" id="Q9LNV3">
    <property type="expression patterns" value="baseline and differential"/>
</dbReference>
<dbReference type="GO" id="GO:0016020">
    <property type="term" value="C:membrane"/>
    <property type="evidence" value="ECO:0007669"/>
    <property type="project" value="UniProtKB-SubCell"/>
</dbReference>
<dbReference type="GO" id="GO:0015145">
    <property type="term" value="F:monosaccharide transmembrane transporter activity"/>
    <property type="evidence" value="ECO:0000314"/>
    <property type="project" value="TAIR"/>
</dbReference>
<dbReference type="GO" id="GO:0015293">
    <property type="term" value="F:symporter activity"/>
    <property type="evidence" value="ECO:0007669"/>
    <property type="project" value="UniProtKB-KW"/>
</dbReference>
<dbReference type="GO" id="GO:0015749">
    <property type="term" value="P:monosaccharide transmembrane transport"/>
    <property type="evidence" value="ECO:0000304"/>
    <property type="project" value="TAIR"/>
</dbReference>
<dbReference type="GO" id="GO:0009555">
    <property type="term" value="P:pollen development"/>
    <property type="evidence" value="ECO:0000304"/>
    <property type="project" value="TAIR"/>
</dbReference>
<dbReference type="CDD" id="cd17361">
    <property type="entry name" value="MFS_STP"/>
    <property type="match status" value="1"/>
</dbReference>
<dbReference type="FunFam" id="1.20.1250.20:FF:000002">
    <property type="entry name" value="Sugar transport protein 13"/>
    <property type="match status" value="1"/>
</dbReference>
<dbReference type="Gene3D" id="1.20.1250.20">
    <property type="entry name" value="MFS general substrate transporter like domains"/>
    <property type="match status" value="1"/>
</dbReference>
<dbReference type="InterPro" id="IPR020846">
    <property type="entry name" value="MFS_dom"/>
</dbReference>
<dbReference type="InterPro" id="IPR044778">
    <property type="entry name" value="MFS_STP/MST-like_plant"/>
</dbReference>
<dbReference type="InterPro" id="IPR005828">
    <property type="entry name" value="MFS_sugar_transport-like"/>
</dbReference>
<dbReference type="InterPro" id="IPR036259">
    <property type="entry name" value="MFS_trans_sf"/>
</dbReference>
<dbReference type="InterPro" id="IPR045262">
    <property type="entry name" value="STP/PLT_plant"/>
</dbReference>
<dbReference type="InterPro" id="IPR003663">
    <property type="entry name" value="Sugar/inositol_transpt"/>
</dbReference>
<dbReference type="InterPro" id="IPR005829">
    <property type="entry name" value="Sugar_transporter_CS"/>
</dbReference>
<dbReference type="NCBIfam" id="TIGR00879">
    <property type="entry name" value="SP"/>
    <property type="match status" value="1"/>
</dbReference>
<dbReference type="PANTHER" id="PTHR23500">
    <property type="entry name" value="SOLUTE CARRIER FAMILY 2, FACILITATED GLUCOSE TRANSPORTER"/>
    <property type="match status" value="1"/>
</dbReference>
<dbReference type="PANTHER" id="PTHR23500:SF511">
    <property type="entry name" value="SUGAR TRANSPORT PROTEIN 2"/>
    <property type="match status" value="1"/>
</dbReference>
<dbReference type="Pfam" id="PF00083">
    <property type="entry name" value="Sugar_tr"/>
    <property type="match status" value="1"/>
</dbReference>
<dbReference type="PRINTS" id="PR00171">
    <property type="entry name" value="SUGRTRNSPORT"/>
</dbReference>
<dbReference type="SUPFAM" id="SSF103473">
    <property type="entry name" value="MFS general substrate transporter"/>
    <property type="match status" value="1"/>
</dbReference>
<dbReference type="PROSITE" id="PS50850">
    <property type="entry name" value="MFS"/>
    <property type="match status" value="1"/>
</dbReference>
<dbReference type="PROSITE" id="PS00216">
    <property type="entry name" value="SUGAR_TRANSPORT_1"/>
    <property type="match status" value="1"/>
</dbReference>
<dbReference type="PROSITE" id="PS00217">
    <property type="entry name" value="SUGAR_TRANSPORT_2"/>
    <property type="match status" value="1"/>
</dbReference>
<comment type="function">
    <text evidence="2">Mediates an active uptake of hexoses, probably by sugar/hydrogen symport. Can transport glucose, 3-O-methylglucose, xylose, mannose, fructose and galactose.</text>
</comment>
<comment type="biophysicochemical properties">
    <kinetics>
        <KM evidence="2">50 uM for galactose</KM>
        <KM evidence="2">20 uM for 3-O-methylglucose</KM>
    </kinetics>
</comment>
<comment type="interaction">
    <interactant intactId="EBI-25512884">
        <id>Q9LNV3</id>
    </interactant>
    <interactant intactId="EBI-2128593">
        <id>Q9LPQ3</id>
        <label>MKK7</label>
    </interactant>
    <organismsDiffer>false</organismsDiffer>
    <experiments>3</experiments>
</comment>
<comment type="interaction">
    <interactant intactId="EBI-25512884">
        <id>Q9LNV3</id>
    </interactant>
    <interactant intactId="EBI-1238932">
        <id>Q39021</id>
        <label>MPK1</label>
    </interactant>
    <organismsDiffer>false</organismsDiffer>
    <experiments>3</experiments>
</comment>
<comment type="subcellular location">
    <subcellularLocation>
        <location>Membrane</location>
        <topology>Multi-pass membrane protein</topology>
    </subcellularLocation>
</comment>
<comment type="tissue specificity">
    <text evidence="2">Pollen specific (at protein level).</text>
</comment>
<comment type="developmental stage">
    <text evidence="2">Specifically expressed in pollen grains when the callose of microspores tetrads undergoes degradation, between early tetrad and late trinucleate stages (at protein level).</text>
</comment>
<comment type="similarity">
    <text evidence="3">Belongs to the major facilitator superfamily. Sugar transporter (TC 2.A.1.1) family.</text>
</comment>
<comment type="sequence caution" evidence="3">
    <conflict type="erroneous gene model prediction">
        <sequence resource="EMBL-CDS" id="AAF79565"/>
    </conflict>
</comment>
<comment type="sequence caution" evidence="3">
    <conflict type="frameshift">
        <sequence resource="EMBL-CDS" id="AAF79565"/>
    </conflict>
</comment>
<comment type="sequence caution" evidence="3">
    <conflict type="miscellaneous discrepancy">
        <sequence resource="EMBL" id="BX813610"/>
    </conflict>
    <text>Sequencing errors.</text>
</comment>
<sequence length="498" mass="55023">MAVGSMNVEEGTKAFPAKLTGQVFLCCVIAAVGGLMFGYDIGISGGVTSMDTFLLDFFPHVYEKKHRVHENNYCKFDDQLLQLFTSSLYLAGIFASFISSYVSRAFGRKPTIMLASIFFLVGAILNLSAQELGMLIGGRILLGFGIGFGNQTVPLFISEIAPARYRGGLNVMFQFLITIGILAASYVNYLTSTLKNGWRYSLGGAAVPALILLIGSFFIHETPASLIERGKDEKGKQVLRKIRGIEDIELEFNEIKYATEVATKVKSPFKELFTKSENRPPLVCGTLLQFFQQFTGINVVMFYAPVLFQTMGSGDNASLISTVVTNGVNAIATVISLLVVDFAGRRCLLMEGALQMTATQMTIGGILLAHLKLVGPITGHAVPLIVLILICVYVSGFAWSWGPLGWLVPSEIYPLEVRNAGYFCAVAMNMVCTFIIGQFFLSALCRFRSLLFFFFGIMNIIMGLFVVFFLPETKGVPIEEMAEKRWKTHPRWKKYFKD</sequence>
<accession>Q9LNV3</accession>
<accession>Q9SMV5</accession>
<keyword id="KW-0472">Membrane</keyword>
<keyword id="KW-1185">Reference proteome</keyword>
<keyword id="KW-0762">Sugar transport</keyword>
<keyword id="KW-0769">Symport</keyword>
<keyword id="KW-0812">Transmembrane</keyword>
<keyword id="KW-1133">Transmembrane helix</keyword>
<keyword id="KW-0813">Transport</keyword>
<name>STP2_ARATH</name>
<reference key="1">
    <citation type="journal article" date="2000" name="Nature">
        <title>Sequence and analysis of chromosome 1 of the plant Arabidopsis thaliana.</title>
        <authorList>
            <person name="Theologis A."/>
            <person name="Ecker J.R."/>
            <person name="Palm C.J."/>
            <person name="Federspiel N.A."/>
            <person name="Kaul S."/>
            <person name="White O."/>
            <person name="Alonso J."/>
            <person name="Altafi H."/>
            <person name="Araujo R."/>
            <person name="Bowman C.L."/>
            <person name="Brooks S.Y."/>
            <person name="Buehler E."/>
            <person name="Chan A."/>
            <person name="Chao Q."/>
            <person name="Chen H."/>
            <person name="Cheuk R.F."/>
            <person name="Chin C.W."/>
            <person name="Chung M.K."/>
            <person name="Conn L."/>
            <person name="Conway A.B."/>
            <person name="Conway A.R."/>
            <person name="Creasy T.H."/>
            <person name="Dewar K."/>
            <person name="Dunn P."/>
            <person name="Etgu P."/>
            <person name="Feldblyum T.V."/>
            <person name="Feng J.-D."/>
            <person name="Fong B."/>
            <person name="Fujii C.Y."/>
            <person name="Gill J.E."/>
            <person name="Goldsmith A.D."/>
            <person name="Haas B."/>
            <person name="Hansen N.F."/>
            <person name="Hughes B."/>
            <person name="Huizar L."/>
            <person name="Hunter J.L."/>
            <person name="Jenkins J."/>
            <person name="Johnson-Hopson C."/>
            <person name="Khan S."/>
            <person name="Khaykin E."/>
            <person name="Kim C.J."/>
            <person name="Koo H.L."/>
            <person name="Kremenetskaia I."/>
            <person name="Kurtz D.B."/>
            <person name="Kwan A."/>
            <person name="Lam B."/>
            <person name="Langin-Hooper S."/>
            <person name="Lee A."/>
            <person name="Lee J.M."/>
            <person name="Lenz C.A."/>
            <person name="Li J.H."/>
            <person name="Li Y.-P."/>
            <person name="Lin X."/>
            <person name="Liu S.X."/>
            <person name="Liu Z.A."/>
            <person name="Luros J.S."/>
            <person name="Maiti R."/>
            <person name="Marziali A."/>
            <person name="Militscher J."/>
            <person name="Miranda M."/>
            <person name="Nguyen M."/>
            <person name="Nierman W.C."/>
            <person name="Osborne B.I."/>
            <person name="Pai G."/>
            <person name="Peterson J."/>
            <person name="Pham P.K."/>
            <person name="Rizzo M."/>
            <person name="Rooney T."/>
            <person name="Rowley D."/>
            <person name="Sakano H."/>
            <person name="Salzberg S.L."/>
            <person name="Schwartz J.R."/>
            <person name="Shinn P."/>
            <person name="Southwick A.M."/>
            <person name="Sun H."/>
            <person name="Tallon L.J."/>
            <person name="Tambunga G."/>
            <person name="Toriumi M.J."/>
            <person name="Town C.D."/>
            <person name="Utterback T."/>
            <person name="Van Aken S."/>
            <person name="Vaysberg M."/>
            <person name="Vysotskaia V.S."/>
            <person name="Walker M."/>
            <person name="Wu D."/>
            <person name="Yu G."/>
            <person name="Fraser C.M."/>
            <person name="Venter J.C."/>
            <person name="Davis R.W."/>
        </authorList>
    </citation>
    <scope>NUCLEOTIDE SEQUENCE [LARGE SCALE GENOMIC DNA]</scope>
    <source>
        <strain>cv. Columbia</strain>
    </source>
</reference>
<reference key="2">
    <citation type="journal article" date="2017" name="Plant J.">
        <title>Araport11: a complete reannotation of the Arabidopsis thaliana reference genome.</title>
        <authorList>
            <person name="Cheng C.Y."/>
            <person name="Krishnakumar V."/>
            <person name="Chan A.P."/>
            <person name="Thibaud-Nissen F."/>
            <person name="Schobel S."/>
            <person name="Town C.D."/>
        </authorList>
    </citation>
    <scope>GENOME REANNOTATION</scope>
    <source>
        <strain>cv. Columbia</strain>
    </source>
</reference>
<reference key="3">
    <citation type="journal article" date="2004" name="Genome Res.">
        <title>Whole genome sequence comparisons and 'full-length' cDNA sequences: a combined approach to evaluate and improve Arabidopsis genome annotation.</title>
        <authorList>
            <person name="Castelli V."/>
            <person name="Aury J.-M."/>
            <person name="Jaillon O."/>
            <person name="Wincker P."/>
            <person name="Clepet C."/>
            <person name="Menard M."/>
            <person name="Cruaud C."/>
            <person name="Quetier F."/>
            <person name="Scarpelli C."/>
            <person name="Schaechter V."/>
            <person name="Temple G."/>
            <person name="Caboche M."/>
            <person name="Weissenbach J."/>
            <person name="Salanoubat M."/>
        </authorList>
    </citation>
    <scope>NUCLEOTIDE SEQUENCE [LARGE SCALE MRNA]</scope>
    <source>
        <strain>cv. Columbia</strain>
    </source>
</reference>
<reference key="4">
    <citation type="journal article" date="1999" name="Plant J.">
        <title>A male gametophyte-specific monosaccharide transporter in Arabidopsis.</title>
        <authorList>
            <person name="Truernit E."/>
            <person name="Stadler R."/>
            <person name="Baier K."/>
            <person name="Sauer N."/>
        </authorList>
    </citation>
    <scope>NUCLEOTIDE SEQUENCE [GENOMIC DNA] OF 1-14</scope>
    <scope>FUNCTION</scope>
    <scope>TISSUE SPECIFICITY</scope>
    <scope>BIOPHYSICOCHEMICAL PROPERTIES</scope>
    <scope>DEVELOPMENTAL STAGE</scope>
    <source>
        <strain>cv. Columbia</strain>
    </source>
</reference>
<reference key="5">
    <citation type="journal article" date="2006" name="BMC Evol. Biol.">
        <title>The monosaccharide transporter gene family in land plants is ancient and shows differential subfamily expression and expansion across lineages.</title>
        <authorList>
            <person name="Johnson D.A."/>
            <person name="Hill J.P."/>
            <person name="Thomas M.A."/>
        </authorList>
    </citation>
    <scope>GENE FAMILY</scope>
</reference>